<evidence type="ECO:0000255" key="1">
    <source>
        <dbReference type="HAMAP-Rule" id="MF_00071"/>
    </source>
</evidence>
<sequence>MALPPTEVHHIRNFCIIAHIDHGKSTLADRLLEITNTLDRSQMSSAQVLDDMDLERERGITIKSHAVQMKYRASDGLDYTLNLIDTPGHVDFSYEVSRSLAACEGALLVVDATQGVEAQTIANLYLALDAGLEIIPVINKIDLPSSDVEGVARQIIDLIGIKRDEILQVSAKAGIGVYELIEAIVKRVPAPSDNKHLPLRALIFDSVFDIYRGTVAYLRIVDGVLKKGDKVRFFANNKVFLADEIGTMSLKRQPSAVLEAGDVGYLICSIKDVKDAKVGDTVTLSDSPALEALAGYKEVKPMVFSGLYPVNSNEFEDLRESLEKLALNDASLIYTPETSVALGFGFRCGFLGLLHMEIIQERLEREYGVNIITTVPNVEYRVILTNGDVVIVDNPSKMPDTSRIGDVEEPYVSMQIITLSDYIGNIMKLGMERRGEYKNTDYLDSTRVNMHFEFPLAEIVFDFHDKLKSISKGYASMDYEYIDYRQSDLVKLDVLLNAEPVDALSIIVHRSKAYEWGRKLCTKLKGIIPKQMYEVAIQAAIGSRVISRETISAMRKNVLAKCYGGDISRKRKLLEKQKEGKKRMKQVGRVEIPQEAFLAILTIDE</sequence>
<accession>A1BHJ8</accession>
<proteinExistence type="inferred from homology"/>
<organism>
    <name type="scientific">Chlorobium phaeobacteroides (strain DSM 266 / SMG 266 / 2430)</name>
    <dbReference type="NCBI Taxonomy" id="290317"/>
    <lineage>
        <taxon>Bacteria</taxon>
        <taxon>Pseudomonadati</taxon>
        <taxon>Chlorobiota</taxon>
        <taxon>Chlorobiia</taxon>
        <taxon>Chlorobiales</taxon>
        <taxon>Chlorobiaceae</taxon>
        <taxon>Chlorobium/Pelodictyon group</taxon>
        <taxon>Chlorobium</taxon>
    </lineage>
</organism>
<name>LEPA_CHLPD</name>
<keyword id="KW-0997">Cell inner membrane</keyword>
<keyword id="KW-1003">Cell membrane</keyword>
<keyword id="KW-0342">GTP-binding</keyword>
<keyword id="KW-0378">Hydrolase</keyword>
<keyword id="KW-0472">Membrane</keyword>
<keyword id="KW-0547">Nucleotide-binding</keyword>
<keyword id="KW-0648">Protein biosynthesis</keyword>
<keyword id="KW-1185">Reference proteome</keyword>
<protein>
    <recommendedName>
        <fullName evidence="1">Elongation factor 4</fullName>
        <shortName evidence="1">EF-4</shortName>
        <ecNumber evidence="1">3.6.5.n1</ecNumber>
    </recommendedName>
    <alternativeName>
        <fullName evidence="1">Ribosomal back-translocase LepA</fullName>
    </alternativeName>
</protein>
<reference key="1">
    <citation type="submission" date="2006-12" db="EMBL/GenBank/DDBJ databases">
        <title>Complete sequence of Chlorobium phaeobacteroides DSM 266.</title>
        <authorList>
            <consortium name="US DOE Joint Genome Institute"/>
            <person name="Copeland A."/>
            <person name="Lucas S."/>
            <person name="Lapidus A."/>
            <person name="Barry K."/>
            <person name="Detter J.C."/>
            <person name="Glavina del Rio T."/>
            <person name="Hammon N."/>
            <person name="Israni S."/>
            <person name="Pitluck S."/>
            <person name="Goltsman E."/>
            <person name="Schmutz J."/>
            <person name="Larimer F."/>
            <person name="Land M."/>
            <person name="Hauser L."/>
            <person name="Mikhailova N."/>
            <person name="Li T."/>
            <person name="Overmann J."/>
            <person name="Bryant D.A."/>
            <person name="Richardson P."/>
        </authorList>
    </citation>
    <scope>NUCLEOTIDE SEQUENCE [LARGE SCALE GENOMIC DNA]</scope>
    <source>
        <strain>DSM 266 / SMG 266 / 2430</strain>
    </source>
</reference>
<feature type="chain" id="PRO_1000031985" description="Elongation factor 4">
    <location>
        <begin position="1"/>
        <end position="605"/>
    </location>
</feature>
<feature type="domain" description="tr-type G">
    <location>
        <begin position="9"/>
        <end position="192"/>
    </location>
</feature>
<feature type="binding site" evidence="1">
    <location>
        <begin position="21"/>
        <end position="26"/>
    </location>
    <ligand>
        <name>GTP</name>
        <dbReference type="ChEBI" id="CHEBI:37565"/>
    </ligand>
</feature>
<feature type="binding site" evidence="1">
    <location>
        <begin position="139"/>
        <end position="142"/>
    </location>
    <ligand>
        <name>GTP</name>
        <dbReference type="ChEBI" id="CHEBI:37565"/>
    </ligand>
</feature>
<dbReference type="EC" id="3.6.5.n1" evidence="1"/>
<dbReference type="EMBL" id="CP000492">
    <property type="protein sequence ID" value="ABL65875.1"/>
    <property type="molecule type" value="Genomic_DNA"/>
</dbReference>
<dbReference type="RefSeq" id="WP_011745682.1">
    <property type="nucleotide sequence ID" value="NC_008639.1"/>
</dbReference>
<dbReference type="SMR" id="A1BHJ8"/>
<dbReference type="STRING" id="290317.Cpha266_1859"/>
<dbReference type="KEGG" id="cph:Cpha266_1859"/>
<dbReference type="eggNOG" id="COG0481">
    <property type="taxonomic scope" value="Bacteria"/>
</dbReference>
<dbReference type="HOGENOM" id="CLU_009995_3_3_10"/>
<dbReference type="OrthoDB" id="9801591at2"/>
<dbReference type="Proteomes" id="UP000008701">
    <property type="component" value="Chromosome"/>
</dbReference>
<dbReference type="GO" id="GO:0005886">
    <property type="term" value="C:plasma membrane"/>
    <property type="evidence" value="ECO:0007669"/>
    <property type="project" value="UniProtKB-SubCell"/>
</dbReference>
<dbReference type="GO" id="GO:0005525">
    <property type="term" value="F:GTP binding"/>
    <property type="evidence" value="ECO:0007669"/>
    <property type="project" value="UniProtKB-UniRule"/>
</dbReference>
<dbReference type="GO" id="GO:0003924">
    <property type="term" value="F:GTPase activity"/>
    <property type="evidence" value="ECO:0007669"/>
    <property type="project" value="UniProtKB-UniRule"/>
</dbReference>
<dbReference type="GO" id="GO:0043022">
    <property type="term" value="F:ribosome binding"/>
    <property type="evidence" value="ECO:0007669"/>
    <property type="project" value="UniProtKB-UniRule"/>
</dbReference>
<dbReference type="GO" id="GO:0003746">
    <property type="term" value="F:translation elongation factor activity"/>
    <property type="evidence" value="ECO:0007669"/>
    <property type="project" value="UniProtKB-UniRule"/>
</dbReference>
<dbReference type="GO" id="GO:0045727">
    <property type="term" value="P:positive regulation of translation"/>
    <property type="evidence" value="ECO:0007669"/>
    <property type="project" value="UniProtKB-UniRule"/>
</dbReference>
<dbReference type="CDD" id="cd03699">
    <property type="entry name" value="EF4_II"/>
    <property type="match status" value="1"/>
</dbReference>
<dbReference type="CDD" id="cd16260">
    <property type="entry name" value="EF4_III"/>
    <property type="match status" value="1"/>
</dbReference>
<dbReference type="CDD" id="cd01890">
    <property type="entry name" value="LepA"/>
    <property type="match status" value="1"/>
</dbReference>
<dbReference type="CDD" id="cd03709">
    <property type="entry name" value="lepA_C"/>
    <property type="match status" value="1"/>
</dbReference>
<dbReference type="FunFam" id="3.40.50.300:FF:000078">
    <property type="entry name" value="Elongation factor 4"/>
    <property type="match status" value="1"/>
</dbReference>
<dbReference type="FunFam" id="2.40.30.10:FF:000015">
    <property type="entry name" value="Translation factor GUF1, mitochondrial"/>
    <property type="match status" value="1"/>
</dbReference>
<dbReference type="FunFam" id="3.30.70.240:FF:000007">
    <property type="entry name" value="Translation factor GUF1, mitochondrial"/>
    <property type="match status" value="1"/>
</dbReference>
<dbReference type="FunFam" id="3.30.70.2570:FF:000001">
    <property type="entry name" value="Translation factor GUF1, mitochondrial"/>
    <property type="match status" value="1"/>
</dbReference>
<dbReference type="FunFam" id="3.30.70.870:FF:000004">
    <property type="entry name" value="Translation factor GUF1, mitochondrial"/>
    <property type="match status" value="1"/>
</dbReference>
<dbReference type="Gene3D" id="3.30.70.240">
    <property type="match status" value="1"/>
</dbReference>
<dbReference type="Gene3D" id="3.30.70.2570">
    <property type="entry name" value="Elongation factor 4, C-terminal domain"/>
    <property type="match status" value="1"/>
</dbReference>
<dbReference type="Gene3D" id="3.30.70.870">
    <property type="entry name" value="Elongation Factor G (Translational Gtpase), domain 3"/>
    <property type="match status" value="1"/>
</dbReference>
<dbReference type="Gene3D" id="3.40.50.300">
    <property type="entry name" value="P-loop containing nucleotide triphosphate hydrolases"/>
    <property type="match status" value="1"/>
</dbReference>
<dbReference type="Gene3D" id="2.40.30.10">
    <property type="entry name" value="Translation factors"/>
    <property type="match status" value="1"/>
</dbReference>
<dbReference type="HAMAP" id="MF_00071">
    <property type="entry name" value="LepA"/>
    <property type="match status" value="1"/>
</dbReference>
<dbReference type="InterPro" id="IPR006297">
    <property type="entry name" value="EF-4"/>
</dbReference>
<dbReference type="InterPro" id="IPR035647">
    <property type="entry name" value="EFG_III/V"/>
</dbReference>
<dbReference type="InterPro" id="IPR000640">
    <property type="entry name" value="EFG_V-like"/>
</dbReference>
<dbReference type="InterPro" id="IPR004161">
    <property type="entry name" value="EFTu-like_2"/>
</dbReference>
<dbReference type="InterPro" id="IPR038363">
    <property type="entry name" value="LepA_C_sf"/>
</dbReference>
<dbReference type="InterPro" id="IPR013842">
    <property type="entry name" value="LepA_CTD"/>
</dbReference>
<dbReference type="InterPro" id="IPR035654">
    <property type="entry name" value="LepA_IV"/>
</dbReference>
<dbReference type="InterPro" id="IPR027417">
    <property type="entry name" value="P-loop_NTPase"/>
</dbReference>
<dbReference type="InterPro" id="IPR005225">
    <property type="entry name" value="Small_GTP-bd"/>
</dbReference>
<dbReference type="InterPro" id="IPR000795">
    <property type="entry name" value="T_Tr_GTP-bd_dom"/>
</dbReference>
<dbReference type="NCBIfam" id="TIGR01393">
    <property type="entry name" value="lepA"/>
    <property type="match status" value="1"/>
</dbReference>
<dbReference type="NCBIfam" id="TIGR00231">
    <property type="entry name" value="small_GTP"/>
    <property type="match status" value="1"/>
</dbReference>
<dbReference type="PANTHER" id="PTHR43512:SF4">
    <property type="entry name" value="TRANSLATION FACTOR GUF1 HOMOLOG, CHLOROPLASTIC"/>
    <property type="match status" value="1"/>
</dbReference>
<dbReference type="PANTHER" id="PTHR43512">
    <property type="entry name" value="TRANSLATION FACTOR GUF1-RELATED"/>
    <property type="match status" value="1"/>
</dbReference>
<dbReference type="Pfam" id="PF00679">
    <property type="entry name" value="EFG_C"/>
    <property type="match status" value="1"/>
</dbReference>
<dbReference type="Pfam" id="PF00009">
    <property type="entry name" value="GTP_EFTU"/>
    <property type="match status" value="1"/>
</dbReference>
<dbReference type="Pfam" id="PF03144">
    <property type="entry name" value="GTP_EFTU_D2"/>
    <property type="match status" value="1"/>
</dbReference>
<dbReference type="Pfam" id="PF06421">
    <property type="entry name" value="LepA_C"/>
    <property type="match status" value="1"/>
</dbReference>
<dbReference type="PRINTS" id="PR00315">
    <property type="entry name" value="ELONGATNFCT"/>
</dbReference>
<dbReference type="SUPFAM" id="SSF54980">
    <property type="entry name" value="EF-G C-terminal domain-like"/>
    <property type="match status" value="2"/>
</dbReference>
<dbReference type="SUPFAM" id="SSF52540">
    <property type="entry name" value="P-loop containing nucleoside triphosphate hydrolases"/>
    <property type="match status" value="1"/>
</dbReference>
<dbReference type="PROSITE" id="PS51722">
    <property type="entry name" value="G_TR_2"/>
    <property type="match status" value="1"/>
</dbReference>
<gene>
    <name evidence="1" type="primary">lepA</name>
    <name type="ordered locus">Cpha266_1859</name>
</gene>
<comment type="function">
    <text evidence="1">Required for accurate and efficient protein synthesis under certain stress conditions. May act as a fidelity factor of the translation reaction, by catalyzing a one-codon backward translocation of tRNAs on improperly translocated ribosomes. Back-translocation proceeds from a post-translocation (POST) complex to a pre-translocation (PRE) complex, thus giving elongation factor G a second chance to translocate the tRNAs correctly. Binds to ribosomes in a GTP-dependent manner.</text>
</comment>
<comment type="catalytic activity">
    <reaction evidence="1">
        <text>GTP + H2O = GDP + phosphate + H(+)</text>
        <dbReference type="Rhea" id="RHEA:19669"/>
        <dbReference type="ChEBI" id="CHEBI:15377"/>
        <dbReference type="ChEBI" id="CHEBI:15378"/>
        <dbReference type="ChEBI" id="CHEBI:37565"/>
        <dbReference type="ChEBI" id="CHEBI:43474"/>
        <dbReference type="ChEBI" id="CHEBI:58189"/>
        <dbReference type="EC" id="3.6.5.n1"/>
    </reaction>
</comment>
<comment type="subcellular location">
    <subcellularLocation>
        <location evidence="1">Cell inner membrane</location>
        <topology evidence="1">Peripheral membrane protein</topology>
        <orientation evidence="1">Cytoplasmic side</orientation>
    </subcellularLocation>
</comment>
<comment type="similarity">
    <text evidence="1">Belongs to the TRAFAC class translation factor GTPase superfamily. Classic translation factor GTPase family. LepA subfamily.</text>
</comment>